<evidence type="ECO:0000255" key="1">
    <source>
        <dbReference type="HAMAP-Rule" id="MF_00182"/>
    </source>
</evidence>
<organism>
    <name type="scientific">Bacillus cereus (strain 03BB102)</name>
    <dbReference type="NCBI Taxonomy" id="572264"/>
    <lineage>
        <taxon>Bacteria</taxon>
        <taxon>Bacillati</taxon>
        <taxon>Bacillota</taxon>
        <taxon>Bacilli</taxon>
        <taxon>Bacillales</taxon>
        <taxon>Bacillaceae</taxon>
        <taxon>Bacillus</taxon>
        <taxon>Bacillus cereus group</taxon>
    </lineage>
</organism>
<keyword id="KW-0648">Protein biosynthesis</keyword>
<keyword id="KW-0808">Transferase</keyword>
<name>FMT_BACC3</name>
<feature type="chain" id="PRO_1000190005" description="Methionyl-tRNA formyltransferase">
    <location>
        <begin position="1"/>
        <end position="314"/>
    </location>
</feature>
<feature type="binding site" evidence="1">
    <location>
        <begin position="110"/>
        <end position="113"/>
    </location>
    <ligand>
        <name>(6S)-5,6,7,8-tetrahydrofolate</name>
        <dbReference type="ChEBI" id="CHEBI:57453"/>
    </ligand>
</feature>
<accession>C1EP90</accession>
<proteinExistence type="inferred from homology"/>
<protein>
    <recommendedName>
        <fullName evidence="1">Methionyl-tRNA formyltransferase</fullName>
        <ecNumber evidence="1">2.1.2.9</ecNumber>
    </recommendedName>
</protein>
<reference key="1">
    <citation type="submission" date="2009-02" db="EMBL/GenBank/DDBJ databases">
        <title>Genome sequence of Bacillus cereus 03BB102.</title>
        <authorList>
            <person name="Dodson R.J."/>
            <person name="Jackson P."/>
            <person name="Munk A.C."/>
            <person name="Brettin T."/>
            <person name="Bruce D."/>
            <person name="Detter C."/>
            <person name="Tapia R."/>
            <person name="Han C."/>
            <person name="Sutton G."/>
            <person name="Sims D."/>
        </authorList>
    </citation>
    <scope>NUCLEOTIDE SEQUENCE [LARGE SCALE GENOMIC DNA]</scope>
    <source>
        <strain>03BB102</strain>
    </source>
</reference>
<sequence length="314" mass="34736">MIKVVFMGTPDFSVPVLRRLIEDGYDVIGVVTQPDRPVGRKKVLTPTPVKVEAEKHGIPVLQPLRIREKDEYEKVLALEPDLIVTAAFGQIVPNEILEAPKYGCINVHASLLPELRGGAPIHYAIMEGKEKTGITIMYMVEKLDAGDILTQVEVEIEERETTGSLFDKLSEAGAHLLSKTVPLLIQGKLEPIKQNEEEVTFAYNIKREQEKIDWTKTGEEVYNHIRGLNPWPVAYTTLAGQVVKVWWGEKVPVTKSAEAGTIVAIEEDGFVVATGNETGVKITELQPSGKKRMSCSQFLRGTKPEIGTKLGENA</sequence>
<gene>
    <name evidence="1" type="primary">fmt</name>
    <name type="ordered locus">BCA_3966</name>
</gene>
<dbReference type="EC" id="2.1.2.9" evidence="1"/>
<dbReference type="EMBL" id="CP001407">
    <property type="protein sequence ID" value="ACO27179.1"/>
    <property type="molecule type" value="Genomic_DNA"/>
</dbReference>
<dbReference type="RefSeq" id="WP_000598790.1">
    <property type="nucleotide sequence ID" value="NZ_CP009318.1"/>
</dbReference>
<dbReference type="SMR" id="C1EP90"/>
<dbReference type="GeneID" id="45023695"/>
<dbReference type="KEGG" id="bcx:BCA_3966"/>
<dbReference type="PATRIC" id="fig|572264.18.peg.3922"/>
<dbReference type="Proteomes" id="UP000002210">
    <property type="component" value="Chromosome"/>
</dbReference>
<dbReference type="GO" id="GO:0005829">
    <property type="term" value="C:cytosol"/>
    <property type="evidence" value="ECO:0007669"/>
    <property type="project" value="TreeGrafter"/>
</dbReference>
<dbReference type="GO" id="GO:0004479">
    <property type="term" value="F:methionyl-tRNA formyltransferase activity"/>
    <property type="evidence" value="ECO:0007669"/>
    <property type="project" value="UniProtKB-UniRule"/>
</dbReference>
<dbReference type="CDD" id="cd08646">
    <property type="entry name" value="FMT_core_Met-tRNA-FMT_N"/>
    <property type="match status" value="1"/>
</dbReference>
<dbReference type="CDD" id="cd08704">
    <property type="entry name" value="Met_tRNA_FMT_C"/>
    <property type="match status" value="1"/>
</dbReference>
<dbReference type="FunFam" id="3.10.25.10:FF:000003">
    <property type="entry name" value="Methionyl-tRNA formyltransferase"/>
    <property type="match status" value="1"/>
</dbReference>
<dbReference type="FunFam" id="3.40.50.170:FF:000004">
    <property type="entry name" value="Methionyl-tRNA formyltransferase"/>
    <property type="match status" value="1"/>
</dbReference>
<dbReference type="Gene3D" id="3.10.25.10">
    <property type="entry name" value="Formyl transferase, C-terminal domain"/>
    <property type="match status" value="1"/>
</dbReference>
<dbReference type="Gene3D" id="3.40.50.170">
    <property type="entry name" value="Formyl transferase, N-terminal domain"/>
    <property type="match status" value="1"/>
</dbReference>
<dbReference type="HAMAP" id="MF_00182">
    <property type="entry name" value="Formyl_trans"/>
    <property type="match status" value="1"/>
</dbReference>
<dbReference type="InterPro" id="IPR005794">
    <property type="entry name" value="Fmt"/>
</dbReference>
<dbReference type="InterPro" id="IPR005793">
    <property type="entry name" value="Formyl_trans_C"/>
</dbReference>
<dbReference type="InterPro" id="IPR037022">
    <property type="entry name" value="Formyl_trans_C_sf"/>
</dbReference>
<dbReference type="InterPro" id="IPR002376">
    <property type="entry name" value="Formyl_transf_N"/>
</dbReference>
<dbReference type="InterPro" id="IPR036477">
    <property type="entry name" value="Formyl_transf_N_sf"/>
</dbReference>
<dbReference type="InterPro" id="IPR011034">
    <property type="entry name" value="Formyl_transferase-like_C_sf"/>
</dbReference>
<dbReference type="InterPro" id="IPR001555">
    <property type="entry name" value="GART_AS"/>
</dbReference>
<dbReference type="InterPro" id="IPR044135">
    <property type="entry name" value="Met-tRNA-FMT_C"/>
</dbReference>
<dbReference type="InterPro" id="IPR041711">
    <property type="entry name" value="Met-tRNA-FMT_N"/>
</dbReference>
<dbReference type="NCBIfam" id="TIGR00460">
    <property type="entry name" value="fmt"/>
    <property type="match status" value="1"/>
</dbReference>
<dbReference type="PANTHER" id="PTHR11138">
    <property type="entry name" value="METHIONYL-TRNA FORMYLTRANSFERASE"/>
    <property type="match status" value="1"/>
</dbReference>
<dbReference type="PANTHER" id="PTHR11138:SF5">
    <property type="entry name" value="METHIONYL-TRNA FORMYLTRANSFERASE, MITOCHONDRIAL"/>
    <property type="match status" value="1"/>
</dbReference>
<dbReference type="Pfam" id="PF02911">
    <property type="entry name" value="Formyl_trans_C"/>
    <property type="match status" value="1"/>
</dbReference>
<dbReference type="Pfam" id="PF00551">
    <property type="entry name" value="Formyl_trans_N"/>
    <property type="match status" value="1"/>
</dbReference>
<dbReference type="SUPFAM" id="SSF50486">
    <property type="entry name" value="FMT C-terminal domain-like"/>
    <property type="match status" value="1"/>
</dbReference>
<dbReference type="SUPFAM" id="SSF53328">
    <property type="entry name" value="Formyltransferase"/>
    <property type="match status" value="1"/>
</dbReference>
<dbReference type="PROSITE" id="PS00373">
    <property type="entry name" value="GART"/>
    <property type="match status" value="1"/>
</dbReference>
<comment type="function">
    <text evidence="1">Attaches a formyl group to the free amino group of methionyl-tRNA(fMet). The formyl group appears to play a dual role in the initiator identity of N-formylmethionyl-tRNA by promoting its recognition by IF2 and preventing the misappropriation of this tRNA by the elongation apparatus.</text>
</comment>
<comment type="catalytic activity">
    <reaction evidence="1">
        <text>L-methionyl-tRNA(fMet) + (6R)-10-formyltetrahydrofolate = N-formyl-L-methionyl-tRNA(fMet) + (6S)-5,6,7,8-tetrahydrofolate + H(+)</text>
        <dbReference type="Rhea" id="RHEA:24380"/>
        <dbReference type="Rhea" id="RHEA-COMP:9952"/>
        <dbReference type="Rhea" id="RHEA-COMP:9953"/>
        <dbReference type="ChEBI" id="CHEBI:15378"/>
        <dbReference type="ChEBI" id="CHEBI:57453"/>
        <dbReference type="ChEBI" id="CHEBI:78530"/>
        <dbReference type="ChEBI" id="CHEBI:78844"/>
        <dbReference type="ChEBI" id="CHEBI:195366"/>
        <dbReference type="EC" id="2.1.2.9"/>
    </reaction>
</comment>
<comment type="similarity">
    <text evidence="1">Belongs to the Fmt family.</text>
</comment>